<feature type="chain" id="PRO_0000431649" description="Sm-like protein LSM36B">
    <location>
        <begin position="1"/>
        <end position="91"/>
    </location>
</feature>
<feature type="domain" description="Sm" evidence="1">
    <location>
        <begin position="14"/>
        <end position="86"/>
    </location>
</feature>
<feature type="sequence conflict" description="In Ref. 4; BAH20395." evidence="6" ref="4">
    <original>T</original>
    <variation>A</variation>
    <location>
        <position position="55"/>
    </location>
</feature>
<comment type="function">
    <text evidence="2 3">Component of LSM protein complexes, which are involved in RNA processing. Component of the cytoplasmic LSM1-LSM7 complex which is involved in mRNA degradation by promoting decapping and leading to accurate 5'-3' mRNA decay. The cytoplasmic LSM1-LSM7 complex regulates developmental gene expression by the decapping of specific development-related transcripts. Component of the nuclear LSM2-LSM8 complex which is involved splicing nuclear mRNAs. LSM2-LSM8 binds directly to the U6 small nuclear RNAs (snRNAs) and is essential for accurate splicing of selected development-related mRNAs through the stabilization of the spliceosomal U6 snRNA. Plays a critical role in the regulation of development-related gene expression.</text>
</comment>
<comment type="subunit">
    <text evidence="2 3">Component of the heptameric LSM1-LSM7 complex that forms a seven-membered ring structure with a donut shape. The LSM subunits are arranged in the order LSM1, LSM2, LSM3, LSM6, LSM5, LSM7 and LSM4. Component of the heptameric LSM2-LSM8 complex that forms a seven-membered ring structure with a donut shape. The LSM subunits are arranged in the order LSM8, LSM2, LSM3, LSM6, LSM5, LSM7 and LSM4 (PubMed:23221597, PubMed:23620288). LSM6B subunit interacts only with its two neighboring subunits, LSM3A or LSM3B and LSM5 (PubMed:23221597).</text>
</comment>
<comment type="subcellular location">
    <subcellularLocation>
        <location evidence="2">Cytoplasm</location>
    </subcellularLocation>
    <subcellularLocation>
        <location evidence="2">Nucleus</location>
    </subcellularLocation>
</comment>
<comment type="tissue specificity">
    <text evidence="2 3">Expressed in roots, leaves, stems, flowers and siliques.</text>
</comment>
<comment type="similarity">
    <text evidence="6">Belongs to the snRNP Sm proteins family.</text>
</comment>
<protein>
    <recommendedName>
        <fullName evidence="6">Sm-like protein LSM36B</fullName>
        <shortName evidence="5">AtLSM6B</shortName>
    </recommendedName>
    <alternativeName>
        <fullName evidence="6">U6 snRNA-associated Sm-like protein LSM6B</fullName>
    </alternativeName>
</protein>
<gene>
    <name evidence="4" type="primary">LSM6B</name>
    <name evidence="7" type="ordered locus">At2g43810</name>
</gene>
<keyword id="KW-0963">Cytoplasm</keyword>
<keyword id="KW-0507">mRNA processing</keyword>
<keyword id="KW-0508">mRNA splicing</keyword>
<keyword id="KW-0539">Nucleus</keyword>
<keyword id="KW-1185">Reference proteome</keyword>
<keyword id="KW-0687">Ribonucleoprotein</keyword>
<keyword id="KW-0694">RNA-binding</keyword>
<keyword id="KW-0747">Spliceosome</keyword>
<accession>O22823</accession>
<accession>B9DI28</accession>
<sequence>MSGVGEKASGTTKTPADFLKSIRGKPVVVKLNSGVDYRGILTCLDGYMNIAMEQTEEYVNGQLKNTYGDAFVRGNNVLYISTTKGTLSDGA</sequence>
<proteinExistence type="evidence at protein level"/>
<dbReference type="EMBL" id="AC002333">
    <property type="protein sequence ID" value="AAB64025.1"/>
    <property type="molecule type" value="Genomic_DNA"/>
</dbReference>
<dbReference type="EMBL" id="CP002685">
    <property type="protein sequence ID" value="AEC10329.1"/>
    <property type="molecule type" value="Genomic_DNA"/>
</dbReference>
<dbReference type="EMBL" id="CP002685">
    <property type="protein sequence ID" value="AEC10330.1"/>
    <property type="molecule type" value="Genomic_DNA"/>
</dbReference>
<dbReference type="EMBL" id="CP002685">
    <property type="protein sequence ID" value="ANM62773.1"/>
    <property type="molecule type" value="Genomic_DNA"/>
</dbReference>
<dbReference type="EMBL" id="BT008305">
    <property type="protein sequence ID" value="AAP37664.1"/>
    <property type="molecule type" value="mRNA"/>
</dbReference>
<dbReference type="EMBL" id="AK317095">
    <property type="protein sequence ID" value="BAH19786.1"/>
    <property type="molecule type" value="mRNA"/>
</dbReference>
<dbReference type="EMBL" id="AK317739">
    <property type="protein sequence ID" value="BAH20395.1"/>
    <property type="molecule type" value="mRNA"/>
</dbReference>
<dbReference type="EMBL" id="AK227857">
    <property type="protein sequence ID" value="BAE99834.1"/>
    <property type="molecule type" value="mRNA"/>
</dbReference>
<dbReference type="PIR" id="G84870">
    <property type="entry name" value="G84870"/>
</dbReference>
<dbReference type="RefSeq" id="NP_001078052.1">
    <property type="nucleotide sequence ID" value="NM_001084583.2"/>
</dbReference>
<dbReference type="RefSeq" id="NP_001318419.1">
    <property type="nucleotide sequence ID" value="NM_001337061.1"/>
</dbReference>
<dbReference type="RefSeq" id="NP_181909.1">
    <property type="nucleotide sequence ID" value="NM_129943.3"/>
</dbReference>
<dbReference type="SMR" id="O22823"/>
<dbReference type="ComplexPortal" id="CPX-1345">
    <property type="entry name" value="LSM1-7-PAT1 complex, variant LSM1A-LSM3B-LSM6B-PAT1"/>
</dbReference>
<dbReference type="ComplexPortal" id="CPX-1349">
    <property type="entry name" value="LSM1-7-PAT1 complex, variant LSM1B-LSM3B-LSM6B-PAT1"/>
</dbReference>
<dbReference type="ComplexPortal" id="CPX-1350">
    <property type="entry name" value="LSM1-7-PAT1 complex, variant LSM1B-LSM3A-LSM6B-PAT1"/>
</dbReference>
<dbReference type="ComplexPortal" id="CPX-1351">
    <property type="entry name" value="LSM1-7-PAT1 complex, variant LSM1A-LSM3A-LSM6B-PAT1"/>
</dbReference>
<dbReference type="ComplexPortal" id="CPX-1352">
    <property type="entry name" value="LSM2-8 complex, variant LSM3A-LSM6B"/>
</dbReference>
<dbReference type="ComplexPortal" id="CPX-1354">
    <property type="entry name" value="LSM2-8 complex, variant LSM3B-LSM6B"/>
</dbReference>
<dbReference type="ComplexPortal" id="CPX-1392">
    <property type="entry name" value="LSM1-7-PAT1 complex, variant LSM1A-LSM3A-LSM6B-PAT1H1"/>
</dbReference>
<dbReference type="ComplexPortal" id="CPX-1394">
    <property type="entry name" value="LSM1-7-PAT1 complex, variant LSM1A-LSM3B-LSM6B-PAT1H1"/>
</dbReference>
<dbReference type="ComplexPortal" id="CPX-1396">
    <property type="entry name" value="LSM1-7-PAT1 complex, variant LSM1B-LSM3A-LSM6B-PAT1H1"/>
</dbReference>
<dbReference type="ComplexPortal" id="CPX-1398">
    <property type="entry name" value="LSM1-7-PAT1 complex, variant LSM1B-LSM3B-LSM6B-PAT1H1"/>
</dbReference>
<dbReference type="ComplexPortal" id="CPX-1400">
    <property type="entry name" value="LSM1-7-PAT1 complex, variant LSM1A-LSM3A-LSM6B-PAT1H2"/>
</dbReference>
<dbReference type="ComplexPortal" id="CPX-1402">
    <property type="entry name" value="LSM1-7-PAT1 complex, variant LSM1A-LSM3B-LSM6B-PAT1H2"/>
</dbReference>
<dbReference type="ComplexPortal" id="CPX-1404">
    <property type="entry name" value="LSM1-7-PAT1 complex, variant LSM1B-LSM3A-LSM6B-PAT1H2"/>
</dbReference>
<dbReference type="ComplexPortal" id="CPX-1406">
    <property type="entry name" value="LSM1-7-PAT1 complex, variant LSM1B-LSM3B-LSM6B-PAT1H2"/>
</dbReference>
<dbReference type="FunCoup" id="O22823">
    <property type="interactions" value="4194"/>
</dbReference>
<dbReference type="IntAct" id="O22823">
    <property type="interactions" value="1"/>
</dbReference>
<dbReference type="STRING" id="3702.O22823"/>
<dbReference type="iPTMnet" id="O22823"/>
<dbReference type="PaxDb" id="3702-AT2G43810.1"/>
<dbReference type="ProteomicsDB" id="238633"/>
<dbReference type="EnsemblPlants" id="AT2G43810.1">
    <property type="protein sequence ID" value="AT2G43810.1"/>
    <property type="gene ID" value="AT2G43810"/>
</dbReference>
<dbReference type="EnsemblPlants" id="AT2G43810.2">
    <property type="protein sequence ID" value="AT2G43810.2"/>
    <property type="gene ID" value="AT2G43810"/>
</dbReference>
<dbReference type="EnsemblPlants" id="AT2G43810.3">
    <property type="protein sequence ID" value="AT2G43810.3"/>
    <property type="gene ID" value="AT2G43810"/>
</dbReference>
<dbReference type="GeneID" id="818985"/>
<dbReference type="Gramene" id="AT2G43810.1">
    <property type="protein sequence ID" value="AT2G43810.1"/>
    <property type="gene ID" value="AT2G43810"/>
</dbReference>
<dbReference type="Gramene" id="AT2G43810.2">
    <property type="protein sequence ID" value="AT2G43810.2"/>
    <property type="gene ID" value="AT2G43810"/>
</dbReference>
<dbReference type="Gramene" id="AT2G43810.3">
    <property type="protein sequence ID" value="AT2G43810.3"/>
    <property type="gene ID" value="AT2G43810"/>
</dbReference>
<dbReference type="KEGG" id="ath:AT2G43810"/>
<dbReference type="Araport" id="AT2G43810"/>
<dbReference type="TAIR" id="AT2G43810">
    <property type="gene designation" value="LSM6B"/>
</dbReference>
<dbReference type="eggNOG" id="KOG1783">
    <property type="taxonomic scope" value="Eukaryota"/>
</dbReference>
<dbReference type="HOGENOM" id="CLU_076902_7_5_1"/>
<dbReference type="InParanoid" id="O22823"/>
<dbReference type="OMA" id="MYISEQK"/>
<dbReference type="OrthoDB" id="268799at2759"/>
<dbReference type="PhylomeDB" id="O22823"/>
<dbReference type="PRO" id="PR:O22823"/>
<dbReference type="Proteomes" id="UP000006548">
    <property type="component" value="Chromosome 2"/>
</dbReference>
<dbReference type="ExpressionAtlas" id="O22823">
    <property type="expression patterns" value="baseline and differential"/>
</dbReference>
<dbReference type="GO" id="GO:1990726">
    <property type="term" value="C:Lsm1-7-Pat1 complex"/>
    <property type="evidence" value="ECO:0000303"/>
    <property type="project" value="ComplexPortal"/>
</dbReference>
<dbReference type="GO" id="GO:0120115">
    <property type="term" value="C:Lsm2-8 complex"/>
    <property type="evidence" value="ECO:0000315"/>
    <property type="project" value="ComplexPortal"/>
</dbReference>
<dbReference type="GO" id="GO:0005634">
    <property type="term" value="C:nucleus"/>
    <property type="evidence" value="ECO:0000314"/>
    <property type="project" value="ComplexPortal"/>
</dbReference>
<dbReference type="GO" id="GO:0000932">
    <property type="term" value="C:P-body"/>
    <property type="evidence" value="ECO:0000303"/>
    <property type="project" value="ComplexPortal"/>
</dbReference>
<dbReference type="GO" id="GO:0005681">
    <property type="term" value="C:spliceosomal complex"/>
    <property type="evidence" value="ECO:0007669"/>
    <property type="project" value="UniProtKB-KW"/>
</dbReference>
<dbReference type="GO" id="GO:0003729">
    <property type="term" value="F:mRNA binding"/>
    <property type="evidence" value="ECO:0000314"/>
    <property type="project" value="TAIR"/>
</dbReference>
<dbReference type="GO" id="GO:0000290">
    <property type="term" value="P:deadenylation-dependent decapping of nuclear-transcribed mRNA"/>
    <property type="evidence" value="ECO:0000269"/>
    <property type="project" value="ComplexPortal"/>
</dbReference>
<dbReference type="GO" id="GO:0000398">
    <property type="term" value="P:mRNA splicing, via spliceosome"/>
    <property type="evidence" value="ECO:0000315"/>
    <property type="project" value="ComplexPortal"/>
</dbReference>
<dbReference type="CDD" id="cd01726">
    <property type="entry name" value="LSm6"/>
    <property type="match status" value="1"/>
</dbReference>
<dbReference type="FunFam" id="2.30.30.100:FF:000010">
    <property type="entry name" value="U6 snRNA-associated Sm-like protein LSm6"/>
    <property type="match status" value="1"/>
</dbReference>
<dbReference type="Gene3D" id="2.30.30.100">
    <property type="match status" value="1"/>
</dbReference>
<dbReference type="InterPro" id="IPR016487">
    <property type="entry name" value="Lsm6/sSmF"/>
</dbReference>
<dbReference type="InterPro" id="IPR010920">
    <property type="entry name" value="LSM_dom_sf"/>
</dbReference>
<dbReference type="InterPro" id="IPR047575">
    <property type="entry name" value="Sm"/>
</dbReference>
<dbReference type="InterPro" id="IPR001163">
    <property type="entry name" value="Sm_dom_euk/arc"/>
</dbReference>
<dbReference type="PANTHER" id="PTHR11021:SF8">
    <property type="entry name" value="SM-LIKE PROTEIN LSM36B-RELATED"/>
    <property type="match status" value="1"/>
</dbReference>
<dbReference type="PANTHER" id="PTHR11021">
    <property type="entry name" value="SMALL NUCLEAR RIBONUCLEOPROTEIN F SNRNP-F"/>
    <property type="match status" value="1"/>
</dbReference>
<dbReference type="Pfam" id="PF01423">
    <property type="entry name" value="LSM"/>
    <property type="match status" value="1"/>
</dbReference>
<dbReference type="SMART" id="SM00651">
    <property type="entry name" value="Sm"/>
    <property type="match status" value="1"/>
</dbReference>
<dbReference type="SUPFAM" id="SSF50182">
    <property type="entry name" value="Sm-like ribonucleoproteins"/>
    <property type="match status" value="1"/>
</dbReference>
<dbReference type="PROSITE" id="PS52002">
    <property type="entry name" value="SM"/>
    <property type="match status" value="1"/>
</dbReference>
<evidence type="ECO:0000255" key="1">
    <source>
        <dbReference type="PROSITE-ProRule" id="PRU01346"/>
    </source>
</evidence>
<evidence type="ECO:0000269" key="2">
    <source>
    </source>
</evidence>
<evidence type="ECO:0000269" key="3">
    <source>
    </source>
</evidence>
<evidence type="ECO:0000303" key="4">
    <source>
    </source>
</evidence>
<evidence type="ECO:0000303" key="5">
    <source>
    </source>
</evidence>
<evidence type="ECO:0000305" key="6"/>
<evidence type="ECO:0000312" key="7">
    <source>
        <dbReference type="Araport" id="AT2G43810"/>
    </source>
</evidence>
<organism>
    <name type="scientific">Arabidopsis thaliana</name>
    <name type="common">Mouse-ear cress</name>
    <dbReference type="NCBI Taxonomy" id="3702"/>
    <lineage>
        <taxon>Eukaryota</taxon>
        <taxon>Viridiplantae</taxon>
        <taxon>Streptophyta</taxon>
        <taxon>Embryophyta</taxon>
        <taxon>Tracheophyta</taxon>
        <taxon>Spermatophyta</taxon>
        <taxon>Magnoliopsida</taxon>
        <taxon>eudicotyledons</taxon>
        <taxon>Gunneridae</taxon>
        <taxon>Pentapetalae</taxon>
        <taxon>rosids</taxon>
        <taxon>malvids</taxon>
        <taxon>Brassicales</taxon>
        <taxon>Brassicaceae</taxon>
        <taxon>Camelineae</taxon>
        <taxon>Arabidopsis</taxon>
    </lineage>
</organism>
<reference key="1">
    <citation type="journal article" date="1999" name="Nature">
        <title>Sequence and analysis of chromosome 2 of the plant Arabidopsis thaliana.</title>
        <authorList>
            <person name="Lin X."/>
            <person name="Kaul S."/>
            <person name="Rounsley S.D."/>
            <person name="Shea T.P."/>
            <person name="Benito M.-I."/>
            <person name="Town C.D."/>
            <person name="Fujii C.Y."/>
            <person name="Mason T.M."/>
            <person name="Bowman C.L."/>
            <person name="Barnstead M.E."/>
            <person name="Feldblyum T.V."/>
            <person name="Buell C.R."/>
            <person name="Ketchum K.A."/>
            <person name="Lee J.J."/>
            <person name="Ronning C.M."/>
            <person name="Koo H.L."/>
            <person name="Moffat K.S."/>
            <person name="Cronin L.A."/>
            <person name="Shen M."/>
            <person name="Pai G."/>
            <person name="Van Aken S."/>
            <person name="Umayam L."/>
            <person name="Tallon L.J."/>
            <person name="Gill J.E."/>
            <person name="Adams M.D."/>
            <person name="Carrera A.J."/>
            <person name="Creasy T.H."/>
            <person name="Goodman H.M."/>
            <person name="Somerville C.R."/>
            <person name="Copenhaver G.P."/>
            <person name="Preuss D."/>
            <person name="Nierman W.C."/>
            <person name="White O."/>
            <person name="Eisen J.A."/>
            <person name="Salzberg S.L."/>
            <person name="Fraser C.M."/>
            <person name="Venter J.C."/>
        </authorList>
    </citation>
    <scope>NUCLEOTIDE SEQUENCE [LARGE SCALE GENOMIC DNA]</scope>
    <source>
        <strain>cv. Columbia</strain>
    </source>
</reference>
<reference key="2">
    <citation type="journal article" date="2017" name="Plant J.">
        <title>Araport11: a complete reannotation of the Arabidopsis thaliana reference genome.</title>
        <authorList>
            <person name="Cheng C.Y."/>
            <person name="Krishnakumar V."/>
            <person name="Chan A.P."/>
            <person name="Thibaud-Nissen F."/>
            <person name="Schobel S."/>
            <person name="Town C.D."/>
        </authorList>
    </citation>
    <scope>GENOME REANNOTATION</scope>
    <source>
        <strain>cv. Columbia</strain>
    </source>
</reference>
<reference key="3">
    <citation type="journal article" date="2003" name="Science">
        <title>Empirical analysis of transcriptional activity in the Arabidopsis genome.</title>
        <authorList>
            <person name="Yamada K."/>
            <person name="Lim J."/>
            <person name="Dale J.M."/>
            <person name="Chen H."/>
            <person name="Shinn P."/>
            <person name="Palm C.J."/>
            <person name="Southwick A.M."/>
            <person name="Wu H.C."/>
            <person name="Kim C.J."/>
            <person name="Nguyen M."/>
            <person name="Pham P.K."/>
            <person name="Cheuk R.F."/>
            <person name="Karlin-Newmann G."/>
            <person name="Liu S.X."/>
            <person name="Lam B."/>
            <person name="Sakano H."/>
            <person name="Wu T."/>
            <person name="Yu G."/>
            <person name="Miranda M."/>
            <person name="Quach H.L."/>
            <person name="Tripp M."/>
            <person name="Chang C.H."/>
            <person name="Lee J.M."/>
            <person name="Toriumi M.J."/>
            <person name="Chan M.M."/>
            <person name="Tang C.C."/>
            <person name="Onodera C.S."/>
            <person name="Deng J.M."/>
            <person name="Akiyama K."/>
            <person name="Ansari Y."/>
            <person name="Arakawa T."/>
            <person name="Banh J."/>
            <person name="Banno F."/>
            <person name="Bowser L."/>
            <person name="Brooks S.Y."/>
            <person name="Carninci P."/>
            <person name="Chao Q."/>
            <person name="Choy N."/>
            <person name="Enju A."/>
            <person name="Goldsmith A.D."/>
            <person name="Gurjal M."/>
            <person name="Hansen N.F."/>
            <person name="Hayashizaki Y."/>
            <person name="Johnson-Hopson C."/>
            <person name="Hsuan V.W."/>
            <person name="Iida K."/>
            <person name="Karnes M."/>
            <person name="Khan S."/>
            <person name="Koesema E."/>
            <person name="Ishida J."/>
            <person name="Jiang P.X."/>
            <person name="Jones T."/>
            <person name="Kawai J."/>
            <person name="Kamiya A."/>
            <person name="Meyers C."/>
            <person name="Nakajima M."/>
            <person name="Narusaka M."/>
            <person name="Seki M."/>
            <person name="Sakurai T."/>
            <person name="Satou M."/>
            <person name="Tamse R."/>
            <person name="Vaysberg M."/>
            <person name="Wallender E.K."/>
            <person name="Wong C."/>
            <person name="Yamamura Y."/>
            <person name="Yuan S."/>
            <person name="Shinozaki K."/>
            <person name="Davis R.W."/>
            <person name="Theologis A."/>
            <person name="Ecker J.R."/>
        </authorList>
    </citation>
    <scope>NUCLEOTIDE SEQUENCE [LARGE SCALE MRNA]</scope>
    <source>
        <strain>cv. Columbia</strain>
    </source>
</reference>
<reference key="4">
    <citation type="journal article" date="2009" name="DNA Res.">
        <title>Analysis of multiple occurrences of alternative splicing events in Arabidopsis thaliana using novel sequenced full-length cDNAs.</title>
        <authorList>
            <person name="Iida K."/>
            <person name="Fukami-Kobayashi K."/>
            <person name="Toyoda A."/>
            <person name="Sakaki Y."/>
            <person name="Kobayashi M."/>
            <person name="Seki M."/>
            <person name="Shinozaki K."/>
        </authorList>
    </citation>
    <scope>NUCLEOTIDE SEQUENCE [LARGE SCALE MRNA]</scope>
    <source>
        <strain>cv. Columbia</strain>
    </source>
</reference>
<reference key="5">
    <citation type="submission" date="2006-07" db="EMBL/GenBank/DDBJ databases">
        <title>Large-scale analysis of RIKEN Arabidopsis full-length (RAFL) cDNAs.</title>
        <authorList>
            <person name="Totoki Y."/>
            <person name="Seki M."/>
            <person name="Ishida J."/>
            <person name="Nakajima M."/>
            <person name="Enju A."/>
            <person name="Kamiya A."/>
            <person name="Narusaka M."/>
            <person name="Shin-i T."/>
            <person name="Nakagawa M."/>
            <person name="Sakamoto N."/>
            <person name="Oishi K."/>
            <person name="Kohara Y."/>
            <person name="Kobayashi M."/>
            <person name="Toyoda A."/>
            <person name="Sakaki Y."/>
            <person name="Sakurai T."/>
            <person name="Iida K."/>
            <person name="Akiyama K."/>
            <person name="Satou M."/>
            <person name="Toyoda T."/>
            <person name="Konagaya A."/>
            <person name="Carninci P."/>
            <person name="Kawai J."/>
            <person name="Hayashizaki Y."/>
            <person name="Shinozaki K."/>
        </authorList>
    </citation>
    <scope>NUCLEOTIDE SEQUENCE [LARGE SCALE MRNA]</scope>
    <source>
        <strain>cv. Columbia</strain>
    </source>
</reference>
<reference key="6">
    <citation type="journal article" date="2012" name="Plant Cell">
        <title>LSM proteins provide accurate splicing and decay of selected transcripts to ensure normal Arabidopsis development.</title>
        <authorList>
            <person name="Perea-Resa C."/>
            <person name="Hernandez-Verdeja T."/>
            <person name="Lopez-Cobollo R."/>
            <person name="del Mar Castellano M."/>
            <person name="Salinas J."/>
        </authorList>
    </citation>
    <scope>FUNCTION</scope>
    <scope>SUBUNIT</scope>
    <scope>INTERACTION WITH LSM3A; LSM3B AND LSM5</scope>
    <scope>SUBCELLULAR LOCATION</scope>
    <scope>TISSUE SPECIFICITY</scope>
    <scope>GENE FAMILY</scope>
</reference>
<reference key="7">
    <citation type="journal article" date="2013" name="Nucleic Acids Res.">
        <title>Arabidopsis thaliana LSM proteins function in mRNA splicing and degradation.</title>
        <authorList>
            <person name="Golisz A."/>
            <person name="Sikorski P.J."/>
            <person name="Kruszka K."/>
            <person name="Kufel J."/>
        </authorList>
    </citation>
    <scope>IDENTIFICATION BY MASS SPECTROMETRY</scope>
    <scope>FUNCTION</scope>
    <scope>SUBUNIT</scope>
    <scope>TISSUE SPECIFICITY</scope>
</reference>
<name>LSM6B_ARATH</name>